<protein>
    <recommendedName>
        <fullName evidence="1">Aminomethyltransferase</fullName>
        <ecNumber evidence="1">2.1.2.10</ecNumber>
    </recommendedName>
    <alternativeName>
        <fullName evidence="1">Glycine cleavage system T protein</fullName>
    </alternativeName>
</protein>
<gene>
    <name evidence="1" type="primary">gcvT</name>
    <name type="ordered locus">Rxyl_3184</name>
</gene>
<comment type="function">
    <text evidence="1">The glycine cleavage system catalyzes the degradation of glycine.</text>
</comment>
<comment type="catalytic activity">
    <reaction evidence="1">
        <text>N(6)-[(R)-S(8)-aminomethyldihydrolipoyl]-L-lysyl-[protein] + (6S)-5,6,7,8-tetrahydrofolate = N(6)-[(R)-dihydrolipoyl]-L-lysyl-[protein] + (6R)-5,10-methylene-5,6,7,8-tetrahydrofolate + NH4(+)</text>
        <dbReference type="Rhea" id="RHEA:16945"/>
        <dbReference type="Rhea" id="RHEA-COMP:10475"/>
        <dbReference type="Rhea" id="RHEA-COMP:10492"/>
        <dbReference type="ChEBI" id="CHEBI:15636"/>
        <dbReference type="ChEBI" id="CHEBI:28938"/>
        <dbReference type="ChEBI" id="CHEBI:57453"/>
        <dbReference type="ChEBI" id="CHEBI:83100"/>
        <dbReference type="ChEBI" id="CHEBI:83143"/>
        <dbReference type="EC" id="2.1.2.10"/>
    </reaction>
</comment>
<comment type="subunit">
    <text evidence="1">The glycine cleavage system is composed of four proteins: P, T, L and H.</text>
</comment>
<comment type="similarity">
    <text evidence="1">Belongs to the GcvT family.</text>
</comment>
<name>GCST_RUBXD</name>
<evidence type="ECO:0000255" key="1">
    <source>
        <dbReference type="HAMAP-Rule" id="MF_00259"/>
    </source>
</evidence>
<keyword id="KW-0032">Aminotransferase</keyword>
<keyword id="KW-1185">Reference proteome</keyword>
<keyword id="KW-0808">Transferase</keyword>
<sequence>MVAVARGTLRRTPLYEEHRALGARLVDFAGWEMPVQYAGIKAEHEAVRTRAGLFDVSHMGEVAFRGPDAERALQRLLTRDVSRLGEGQAGYAAVCLESGGTVDDVIAYRRGEGFLVVVNAANREKDLAHFRRHTADLDVEISDETEEWALLALQGPEAERLLQPFVAGDLSALGRYRFLETHVDGGEAIVARTGYTGEDGFEVFLRPAEAPSLWRRLVEAGAAPAGLGARDTLRLEAGMCLYGNELDEETTPLEAGISFAVHLHKEEEFVGQRALQRQRERGLRKKLVGFELEGRGIARHGYPVAVGGERAGVVTSGTMSPTLGRAIGLAYVPPETEGGFEVLIRERPVPARIVPLPFYRRKRNDPEGGASG</sequence>
<proteinExistence type="inferred from homology"/>
<organism>
    <name type="scientific">Rubrobacter xylanophilus (strain DSM 9941 / JCM 11954 / NBRC 16129 / PRD-1)</name>
    <dbReference type="NCBI Taxonomy" id="266117"/>
    <lineage>
        <taxon>Bacteria</taxon>
        <taxon>Bacillati</taxon>
        <taxon>Actinomycetota</taxon>
        <taxon>Rubrobacteria</taxon>
        <taxon>Rubrobacterales</taxon>
        <taxon>Rubrobacteraceae</taxon>
        <taxon>Rubrobacter</taxon>
    </lineage>
</organism>
<accession>Q1AR89</accession>
<feature type="chain" id="PRO_1000119203" description="Aminomethyltransferase">
    <location>
        <begin position="1"/>
        <end position="372"/>
    </location>
</feature>
<dbReference type="EC" id="2.1.2.10" evidence="1"/>
<dbReference type="EMBL" id="CP000386">
    <property type="protein sequence ID" value="ABG06089.1"/>
    <property type="molecule type" value="Genomic_DNA"/>
</dbReference>
<dbReference type="RefSeq" id="WP_011566094.1">
    <property type="nucleotide sequence ID" value="NC_008148.1"/>
</dbReference>
<dbReference type="SMR" id="Q1AR89"/>
<dbReference type="STRING" id="266117.Rxyl_3184"/>
<dbReference type="KEGG" id="rxy:Rxyl_3184"/>
<dbReference type="eggNOG" id="COG0404">
    <property type="taxonomic scope" value="Bacteria"/>
</dbReference>
<dbReference type="HOGENOM" id="CLU_007884_10_2_11"/>
<dbReference type="OrthoDB" id="9774591at2"/>
<dbReference type="PhylomeDB" id="Q1AR89"/>
<dbReference type="Proteomes" id="UP000006637">
    <property type="component" value="Chromosome"/>
</dbReference>
<dbReference type="GO" id="GO:0005829">
    <property type="term" value="C:cytosol"/>
    <property type="evidence" value="ECO:0007669"/>
    <property type="project" value="TreeGrafter"/>
</dbReference>
<dbReference type="GO" id="GO:0005960">
    <property type="term" value="C:glycine cleavage complex"/>
    <property type="evidence" value="ECO:0007669"/>
    <property type="project" value="InterPro"/>
</dbReference>
<dbReference type="GO" id="GO:0004047">
    <property type="term" value="F:aminomethyltransferase activity"/>
    <property type="evidence" value="ECO:0007669"/>
    <property type="project" value="UniProtKB-UniRule"/>
</dbReference>
<dbReference type="GO" id="GO:0008483">
    <property type="term" value="F:transaminase activity"/>
    <property type="evidence" value="ECO:0007669"/>
    <property type="project" value="UniProtKB-KW"/>
</dbReference>
<dbReference type="GO" id="GO:0019464">
    <property type="term" value="P:glycine decarboxylation via glycine cleavage system"/>
    <property type="evidence" value="ECO:0007669"/>
    <property type="project" value="UniProtKB-UniRule"/>
</dbReference>
<dbReference type="FunFam" id="2.40.30.110:FF:000003">
    <property type="entry name" value="Aminomethyltransferase"/>
    <property type="match status" value="1"/>
</dbReference>
<dbReference type="FunFam" id="3.30.70.1400:FF:000001">
    <property type="entry name" value="Aminomethyltransferase"/>
    <property type="match status" value="1"/>
</dbReference>
<dbReference type="FunFam" id="4.10.1250.10:FF:000001">
    <property type="entry name" value="Aminomethyltransferase"/>
    <property type="match status" value="1"/>
</dbReference>
<dbReference type="Gene3D" id="2.40.30.110">
    <property type="entry name" value="Aminomethyltransferase beta-barrel domains"/>
    <property type="match status" value="1"/>
</dbReference>
<dbReference type="Gene3D" id="3.30.70.1400">
    <property type="entry name" value="Aminomethyltransferase beta-barrel domains"/>
    <property type="match status" value="1"/>
</dbReference>
<dbReference type="Gene3D" id="4.10.1250.10">
    <property type="entry name" value="Aminomethyltransferase fragment"/>
    <property type="match status" value="1"/>
</dbReference>
<dbReference type="Gene3D" id="3.30.1360.120">
    <property type="entry name" value="Probable tRNA modification gtpase trme, domain 1"/>
    <property type="match status" value="1"/>
</dbReference>
<dbReference type="HAMAP" id="MF_00259">
    <property type="entry name" value="GcvT"/>
    <property type="match status" value="1"/>
</dbReference>
<dbReference type="InterPro" id="IPR006223">
    <property type="entry name" value="GCS_T"/>
</dbReference>
<dbReference type="InterPro" id="IPR022903">
    <property type="entry name" value="GCS_T_bac"/>
</dbReference>
<dbReference type="InterPro" id="IPR013977">
    <property type="entry name" value="GCST_C"/>
</dbReference>
<dbReference type="InterPro" id="IPR006222">
    <property type="entry name" value="GCV_T_N"/>
</dbReference>
<dbReference type="InterPro" id="IPR028896">
    <property type="entry name" value="GcvT/YgfZ/DmdA"/>
</dbReference>
<dbReference type="InterPro" id="IPR029043">
    <property type="entry name" value="GcvT/YgfZ_C"/>
</dbReference>
<dbReference type="InterPro" id="IPR027266">
    <property type="entry name" value="TrmE/GcvT_dom1"/>
</dbReference>
<dbReference type="NCBIfam" id="TIGR00528">
    <property type="entry name" value="gcvT"/>
    <property type="match status" value="1"/>
</dbReference>
<dbReference type="NCBIfam" id="NF001567">
    <property type="entry name" value="PRK00389.1"/>
    <property type="match status" value="1"/>
</dbReference>
<dbReference type="PANTHER" id="PTHR43757">
    <property type="entry name" value="AMINOMETHYLTRANSFERASE"/>
    <property type="match status" value="1"/>
</dbReference>
<dbReference type="PANTHER" id="PTHR43757:SF2">
    <property type="entry name" value="AMINOMETHYLTRANSFERASE, MITOCHONDRIAL"/>
    <property type="match status" value="1"/>
</dbReference>
<dbReference type="Pfam" id="PF01571">
    <property type="entry name" value="GCV_T"/>
    <property type="match status" value="1"/>
</dbReference>
<dbReference type="Pfam" id="PF08669">
    <property type="entry name" value="GCV_T_C"/>
    <property type="match status" value="1"/>
</dbReference>
<dbReference type="PIRSF" id="PIRSF006487">
    <property type="entry name" value="GcvT"/>
    <property type="match status" value="1"/>
</dbReference>
<dbReference type="SUPFAM" id="SSF101790">
    <property type="entry name" value="Aminomethyltransferase beta-barrel domain"/>
    <property type="match status" value="1"/>
</dbReference>
<dbReference type="SUPFAM" id="SSF103025">
    <property type="entry name" value="Folate-binding domain"/>
    <property type="match status" value="1"/>
</dbReference>
<reference key="1">
    <citation type="submission" date="2006-06" db="EMBL/GenBank/DDBJ databases">
        <title>Complete sequence of Rubrobacter xylanophilus DSM 9941.</title>
        <authorList>
            <consortium name="US DOE Joint Genome Institute"/>
            <person name="Copeland A."/>
            <person name="Lucas S."/>
            <person name="Lapidus A."/>
            <person name="Barry K."/>
            <person name="Detter J.C."/>
            <person name="Glavina del Rio T."/>
            <person name="Hammon N."/>
            <person name="Israni S."/>
            <person name="Dalin E."/>
            <person name="Tice H."/>
            <person name="Pitluck S."/>
            <person name="Munk A.C."/>
            <person name="Brettin T."/>
            <person name="Bruce D."/>
            <person name="Han C."/>
            <person name="Tapia R."/>
            <person name="Gilna P."/>
            <person name="Schmutz J."/>
            <person name="Larimer F."/>
            <person name="Land M."/>
            <person name="Hauser L."/>
            <person name="Kyrpides N."/>
            <person name="Lykidis A."/>
            <person name="da Costa M.S."/>
            <person name="Rainey F.A."/>
            <person name="Empadinhas N."/>
            <person name="Jolivet E."/>
            <person name="Battista J.R."/>
            <person name="Richardson P."/>
        </authorList>
    </citation>
    <scope>NUCLEOTIDE SEQUENCE [LARGE SCALE GENOMIC DNA]</scope>
    <source>
        <strain>DSM 9941 / JCM 11954 / NBRC 16129 / PRD-1</strain>
    </source>
</reference>